<evidence type="ECO:0000255" key="1">
    <source>
        <dbReference type="HAMAP-Rule" id="MF_01416"/>
    </source>
</evidence>
<name>ATPD_PELPD</name>
<protein>
    <recommendedName>
        <fullName evidence="1">ATP synthase subunit delta</fullName>
    </recommendedName>
    <alternativeName>
        <fullName evidence="1">ATP synthase F(1) sector subunit delta</fullName>
    </alternativeName>
    <alternativeName>
        <fullName evidence="1">F-type ATPase subunit delta</fullName>
        <shortName evidence="1">F-ATPase subunit delta</shortName>
    </alternativeName>
</protein>
<gene>
    <name evidence="1" type="primary">atpH1</name>
    <name type="ordered locus">Ppro_0603</name>
</gene>
<gene>
    <name evidence="1" type="primary">atpH2</name>
    <name type="ordered locus">Ppro_1504</name>
</gene>
<proteinExistence type="inferred from homology"/>
<accession>A1ALL4</accession>
<reference key="1">
    <citation type="submission" date="2006-10" db="EMBL/GenBank/DDBJ databases">
        <title>Complete sequence of chromosome of Pelobacter propionicus DSM 2379.</title>
        <authorList>
            <consortium name="US DOE Joint Genome Institute"/>
            <person name="Copeland A."/>
            <person name="Lucas S."/>
            <person name="Lapidus A."/>
            <person name="Barry K."/>
            <person name="Detter J.C."/>
            <person name="Glavina del Rio T."/>
            <person name="Hammon N."/>
            <person name="Israni S."/>
            <person name="Dalin E."/>
            <person name="Tice H."/>
            <person name="Pitluck S."/>
            <person name="Saunders E."/>
            <person name="Brettin T."/>
            <person name="Bruce D."/>
            <person name="Han C."/>
            <person name="Tapia R."/>
            <person name="Schmutz J."/>
            <person name="Larimer F."/>
            <person name="Land M."/>
            <person name="Hauser L."/>
            <person name="Kyrpides N."/>
            <person name="Kim E."/>
            <person name="Lovley D."/>
            <person name="Richardson P."/>
        </authorList>
    </citation>
    <scope>NUCLEOTIDE SEQUENCE [LARGE SCALE GENOMIC DNA]</scope>
    <source>
        <strain>DSM 2379 / NBRC 103807 / OttBd1</strain>
    </source>
</reference>
<dbReference type="EMBL" id="CP000482">
    <property type="protein sequence ID" value="ABK98234.1"/>
    <property type="molecule type" value="Genomic_DNA"/>
</dbReference>
<dbReference type="EMBL" id="CP000482">
    <property type="protein sequence ID" value="ABK99119.1"/>
    <property type="molecule type" value="Genomic_DNA"/>
</dbReference>
<dbReference type="RefSeq" id="WP_011734547.1">
    <property type="nucleotide sequence ID" value="NC_008609.1"/>
</dbReference>
<dbReference type="SMR" id="A1ALL4"/>
<dbReference type="STRING" id="338966.Ppro_0603"/>
<dbReference type="KEGG" id="ppd:Ppro_0603"/>
<dbReference type="KEGG" id="ppd:Ppro_1504"/>
<dbReference type="eggNOG" id="COG0712">
    <property type="taxonomic scope" value="Bacteria"/>
</dbReference>
<dbReference type="HOGENOM" id="CLU_085114_1_1_7"/>
<dbReference type="OrthoDB" id="9802471at2"/>
<dbReference type="Proteomes" id="UP000006732">
    <property type="component" value="Chromosome"/>
</dbReference>
<dbReference type="GO" id="GO:0005886">
    <property type="term" value="C:plasma membrane"/>
    <property type="evidence" value="ECO:0007669"/>
    <property type="project" value="UniProtKB-SubCell"/>
</dbReference>
<dbReference type="GO" id="GO:0045259">
    <property type="term" value="C:proton-transporting ATP synthase complex"/>
    <property type="evidence" value="ECO:0007669"/>
    <property type="project" value="UniProtKB-KW"/>
</dbReference>
<dbReference type="GO" id="GO:0046933">
    <property type="term" value="F:proton-transporting ATP synthase activity, rotational mechanism"/>
    <property type="evidence" value="ECO:0007669"/>
    <property type="project" value="UniProtKB-UniRule"/>
</dbReference>
<dbReference type="Gene3D" id="1.10.520.20">
    <property type="entry name" value="N-terminal domain of the delta subunit of the F1F0-ATP synthase"/>
    <property type="match status" value="1"/>
</dbReference>
<dbReference type="HAMAP" id="MF_01416">
    <property type="entry name" value="ATP_synth_delta_bact"/>
    <property type="match status" value="1"/>
</dbReference>
<dbReference type="InterPro" id="IPR026015">
    <property type="entry name" value="ATP_synth_OSCP/delta_N_sf"/>
</dbReference>
<dbReference type="InterPro" id="IPR000711">
    <property type="entry name" value="ATPase_OSCP/dsu"/>
</dbReference>
<dbReference type="NCBIfam" id="TIGR01145">
    <property type="entry name" value="ATP_synt_delta"/>
    <property type="match status" value="1"/>
</dbReference>
<dbReference type="PANTHER" id="PTHR11910">
    <property type="entry name" value="ATP SYNTHASE DELTA CHAIN"/>
    <property type="match status" value="1"/>
</dbReference>
<dbReference type="Pfam" id="PF00213">
    <property type="entry name" value="OSCP"/>
    <property type="match status" value="1"/>
</dbReference>
<dbReference type="PRINTS" id="PR00125">
    <property type="entry name" value="ATPASEDELTA"/>
</dbReference>
<dbReference type="SUPFAM" id="SSF47928">
    <property type="entry name" value="N-terminal domain of the delta subunit of the F1F0-ATP synthase"/>
    <property type="match status" value="1"/>
</dbReference>
<organism>
    <name type="scientific">Pelobacter propionicus (strain DSM 2379 / NBRC 103807 / OttBd1)</name>
    <dbReference type="NCBI Taxonomy" id="338966"/>
    <lineage>
        <taxon>Bacteria</taxon>
        <taxon>Pseudomonadati</taxon>
        <taxon>Thermodesulfobacteriota</taxon>
        <taxon>Desulfuromonadia</taxon>
        <taxon>Desulfuromonadales</taxon>
        <taxon>Desulfuromonadaceae</taxon>
        <taxon>Pelobacter</taxon>
    </lineage>
</organism>
<keyword id="KW-0066">ATP synthesis</keyword>
<keyword id="KW-0997">Cell inner membrane</keyword>
<keyword id="KW-1003">Cell membrane</keyword>
<keyword id="KW-0139">CF(1)</keyword>
<keyword id="KW-0375">Hydrogen ion transport</keyword>
<keyword id="KW-0406">Ion transport</keyword>
<keyword id="KW-0472">Membrane</keyword>
<keyword id="KW-1185">Reference proteome</keyword>
<keyword id="KW-0813">Transport</keyword>
<sequence length="180" mass="19678">MINSTIAKRYALSLVQLGAECGLVDRFRGELADVEDLFGTTPEIPAAFADPALSHERKKNIMRELVGSCACSELMGNFLLLLVDKNRVAFFSQIVKAYGQLADEHVGILRPVITTAFELDAVQLAAIREALEKKSAKTIIPQLTVDKAFLGGVVVQIGDTVYDSSVKTQLKRIQDQLQKG</sequence>
<comment type="function">
    <text evidence="1">F(1)F(0) ATP synthase produces ATP from ADP in the presence of a proton or sodium gradient. F-type ATPases consist of two structural domains, F(1) containing the extramembraneous catalytic core and F(0) containing the membrane proton channel, linked together by a central stalk and a peripheral stalk. During catalysis, ATP synthesis in the catalytic domain of F(1) is coupled via a rotary mechanism of the central stalk subunits to proton translocation.</text>
</comment>
<comment type="function">
    <text evidence="1">This protein is part of the stalk that links CF(0) to CF(1). It either transmits conformational changes from CF(0) to CF(1) or is implicated in proton conduction.</text>
</comment>
<comment type="subunit">
    <text evidence="1">F-type ATPases have 2 components, F(1) - the catalytic core - and F(0) - the membrane proton channel. F(1) has five subunits: alpha(3), beta(3), gamma(1), delta(1), epsilon(1). F(0) has three main subunits: a(1), b(2) and c(10-14). The alpha and beta chains form an alternating ring which encloses part of the gamma chain. F(1) is attached to F(0) by a central stalk formed by the gamma and epsilon chains, while a peripheral stalk is formed by the delta and b chains.</text>
</comment>
<comment type="subcellular location">
    <subcellularLocation>
        <location evidence="1">Cell inner membrane</location>
        <topology evidence="1">Peripheral membrane protein</topology>
    </subcellularLocation>
</comment>
<comment type="similarity">
    <text evidence="1">Belongs to the ATPase delta chain family.</text>
</comment>
<feature type="chain" id="PRO_0000371049" description="ATP synthase subunit delta">
    <location>
        <begin position="1"/>
        <end position="180"/>
    </location>
</feature>